<feature type="transit peptide" description="Mitochondrion" evidence="1">
    <location>
        <begin position="1"/>
        <end position="56"/>
    </location>
</feature>
<feature type="chain" id="PRO_0000393388" description="D-lactate dehydrogenase [cytochrome], mitochondrial">
    <location>
        <begin position="57"/>
        <end position="567"/>
    </location>
</feature>
<feature type="domain" description="FAD-binding PCMH-type" evidence="2">
    <location>
        <begin position="142"/>
        <end position="319"/>
    </location>
</feature>
<evidence type="ECO:0000255" key="1"/>
<evidence type="ECO:0000255" key="2">
    <source>
        <dbReference type="PROSITE-ProRule" id="PRU00718"/>
    </source>
</evidence>
<evidence type="ECO:0000269" key="3">
    <source>
    </source>
</evidence>
<evidence type="ECO:0000269" key="4">
    <source>
    </source>
</evidence>
<evidence type="ECO:0000303" key="5">
    <source>
    </source>
</evidence>
<evidence type="ECO:0000303" key="6">
    <source>
    </source>
</evidence>
<evidence type="ECO:0000305" key="7"/>
<evidence type="ECO:0000312" key="8">
    <source>
        <dbReference type="Araport" id="AT5G06580"/>
    </source>
</evidence>
<evidence type="ECO:0000312" key="9">
    <source>
        <dbReference type="EMBL" id="BAB11407.1"/>
    </source>
</evidence>
<keyword id="KW-0274">FAD</keyword>
<keyword id="KW-0285">Flavoprotein</keyword>
<keyword id="KW-0496">Mitochondrion</keyword>
<keyword id="KW-0560">Oxidoreductase</keyword>
<keyword id="KW-1185">Reference proteome</keyword>
<keyword id="KW-0809">Transit peptide</keyword>
<dbReference type="EC" id="1.1.2.4" evidence="3 4"/>
<dbReference type="EMBL" id="AP002543">
    <property type="protein sequence ID" value="BAB11407.1"/>
    <property type="status" value="ALT_SEQ"/>
    <property type="molecule type" value="Genomic_DNA"/>
</dbReference>
<dbReference type="EMBL" id="CP002688">
    <property type="protein sequence ID" value="AED91037.1"/>
    <property type="molecule type" value="Genomic_DNA"/>
</dbReference>
<dbReference type="EMBL" id="AY045641">
    <property type="protein sequence ID" value="AAK73999.1"/>
    <property type="molecule type" value="mRNA"/>
</dbReference>
<dbReference type="RefSeq" id="NP_568170.1">
    <property type="nucleotide sequence ID" value="NM_120741.3"/>
</dbReference>
<dbReference type="SMR" id="Q94AX4"/>
<dbReference type="FunCoup" id="Q94AX4">
    <property type="interactions" value="1174"/>
</dbReference>
<dbReference type="STRING" id="3702.Q94AX4"/>
<dbReference type="SwissPalm" id="Q94AX4"/>
<dbReference type="PaxDb" id="3702-AT5G06580.1"/>
<dbReference type="ProteomicsDB" id="224168"/>
<dbReference type="EnsemblPlants" id="AT5G06580.1">
    <property type="protein sequence ID" value="AT5G06580.1"/>
    <property type="gene ID" value="AT5G06580"/>
</dbReference>
<dbReference type="GeneID" id="830546"/>
<dbReference type="Gramene" id="AT5G06580.1">
    <property type="protein sequence ID" value="AT5G06580.1"/>
    <property type="gene ID" value="AT5G06580"/>
</dbReference>
<dbReference type="KEGG" id="ath:AT5G06580"/>
<dbReference type="Araport" id="AT5G06580"/>
<dbReference type="TAIR" id="AT5G06580">
    <property type="gene designation" value="D-LDH"/>
</dbReference>
<dbReference type="eggNOG" id="KOG1231">
    <property type="taxonomic scope" value="Eukaryota"/>
</dbReference>
<dbReference type="HOGENOM" id="CLU_017779_3_3_1"/>
<dbReference type="InParanoid" id="Q94AX4"/>
<dbReference type="OMA" id="GQGFEWA"/>
<dbReference type="OrthoDB" id="5332616at2759"/>
<dbReference type="PhylomeDB" id="Q94AX4"/>
<dbReference type="BioCyc" id="ARA:AT5G06580-MONOMER"/>
<dbReference type="BioCyc" id="MetaCyc:AT5G06580-MONOMER"/>
<dbReference type="PRO" id="PR:Q94AX4"/>
<dbReference type="Proteomes" id="UP000006548">
    <property type="component" value="Chromosome 5"/>
</dbReference>
<dbReference type="ExpressionAtlas" id="Q94AX4">
    <property type="expression patterns" value="baseline and differential"/>
</dbReference>
<dbReference type="GO" id="GO:0005739">
    <property type="term" value="C:mitochondrion"/>
    <property type="evidence" value="ECO:0000314"/>
    <property type="project" value="UniProtKB"/>
</dbReference>
<dbReference type="GO" id="GO:0005886">
    <property type="term" value="C:plasma membrane"/>
    <property type="evidence" value="ECO:0007005"/>
    <property type="project" value="TAIR"/>
</dbReference>
<dbReference type="GO" id="GO:0005524">
    <property type="term" value="F:ATP binding"/>
    <property type="evidence" value="ECO:0007005"/>
    <property type="project" value="TAIR"/>
</dbReference>
<dbReference type="GO" id="GO:0004458">
    <property type="term" value="F:D-lactate dehydrogenase (cytochrome) activity"/>
    <property type="evidence" value="ECO:0000314"/>
    <property type="project" value="TAIR"/>
</dbReference>
<dbReference type="GO" id="GO:0008720">
    <property type="term" value="F:D-lactate dehydrogenase activity"/>
    <property type="evidence" value="ECO:0000315"/>
    <property type="project" value="TAIR"/>
</dbReference>
<dbReference type="GO" id="GO:0071949">
    <property type="term" value="F:FAD binding"/>
    <property type="evidence" value="ECO:0007669"/>
    <property type="project" value="InterPro"/>
</dbReference>
<dbReference type="GO" id="GO:0050660">
    <property type="term" value="F:flavin adenine dinucleotide binding"/>
    <property type="evidence" value="ECO:0000314"/>
    <property type="project" value="UniProtKB"/>
</dbReference>
<dbReference type="GO" id="GO:0019154">
    <property type="term" value="F:glycolate dehydrogenase activity"/>
    <property type="evidence" value="ECO:0000314"/>
    <property type="project" value="TAIR"/>
</dbReference>
<dbReference type="GO" id="GO:0042802">
    <property type="term" value="F:identical protein binding"/>
    <property type="evidence" value="ECO:0000353"/>
    <property type="project" value="UniProtKB"/>
</dbReference>
<dbReference type="GO" id="GO:0051596">
    <property type="term" value="P:methylglyoxal catabolic process"/>
    <property type="evidence" value="ECO:0000315"/>
    <property type="project" value="UniProtKB"/>
</dbReference>
<dbReference type="FunFam" id="3.30.465.10:FF:000027">
    <property type="entry name" value="D-lactate dehydrogenase [cytochrome], mitochondrial"/>
    <property type="match status" value="1"/>
</dbReference>
<dbReference type="FunFam" id="1.10.45.10:FF:000001">
    <property type="entry name" value="D-lactate dehydrogenase mitochondrial"/>
    <property type="match status" value="1"/>
</dbReference>
<dbReference type="FunFam" id="3.30.70.2740:FF:000001">
    <property type="entry name" value="D-lactate dehydrogenase mitochondrial"/>
    <property type="match status" value="1"/>
</dbReference>
<dbReference type="Gene3D" id="3.30.465.10">
    <property type="match status" value="1"/>
</dbReference>
<dbReference type="Gene3D" id="3.30.70.2740">
    <property type="match status" value="1"/>
</dbReference>
<dbReference type="Gene3D" id="1.10.45.10">
    <property type="entry name" value="Vanillyl-alcohol Oxidase, Chain A, domain 4"/>
    <property type="match status" value="1"/>
</dbReference>
<dbReference type="InterPro" id="IPR004113">
    <property type="entry name" value="FAD-bd_oxidored_4_C"/>
</dbReference>
<dbReference type="InterPro" id="IPR016166">
    <property type="entry name" value="FAD-bd_PCMH"/>
</dbReference>
<dbReference type="InterPro" id="IPR036318">
    <property type="entry name" value="FAD-bd_PCMH-like_sf"/>
</dbReference>
<dbReference type="InterPro" id="IPR016169">
    <property type="entry name" value="FAD-bd_PCMH_sub2"/>
</dbReference>
<dbReference type="InterPro" id="IPR016164">
    <property type="entry name" value="FAD-linked_Oxase-like_C"/>
</dbReference>
<dbReference type="InterPro" id="IPR006094">
    <property type="entry name" value="Oxid_FAD_bind_N"/>
</dbReference>
<dbReference type="InterPro" id="IPR016171">
    <property type="entry name" value="Vanillyl_alc_oxidase_C-sub2"/>
</dbReference>
<dbReference type="PANTHER" id="PTHR11748">
    <property type="entry name" value="D-LACTATE DEHYDROGENASE"/>
    <property type="match status" value="1"/>
</dbReference>
<dbReference type="PANTHER" id="PTHR11748:SF111">
    <property type="entry name" value="D-LACTATE DEHYDROGENASE, MITOCHONDRIAL-RELATED"/>
    <property type="match status" value="1"/>
</dbReference>
<dbReference type="Pfam" id="PF02913">
    <property type="entry name" value="FAD-oxidase_C"/>
    <property type="match status" value="1"/>
</dbReference>
<dbReference type="Pfam" id="PF01565">
    <property type="entry name" value="FAD_binding_4"/>
    <property type="match status" value="1"/>
</dbReference>
<dbReference type="SUPFAM" id="SSF56176">
    <property type="entry name" value="FAD-binding/transporter-associated domain-like"/>
    <property type="match status" value="1"/>
</dbReference>
<dbReference type="SUPFAM" id="SSF55103">
    <property type="entry name" value="FAD-linked oxidases, C-terminal domain"/>
    <property type="match status" value="1"/>
</dbReference>
<dbReference type="PROSITE" id="PS51387">
    <property type="entry name" value="FAD_PCMH"/>
    <property type="match status" value="1"/>
</dbReference>
<name>DLD_ARATH</name>
<organism>
    <name type="scientific">Arabidopsis thaliana</name>
    <name type="common">Mouse-ear cress</name>
    <dbReference type="NCBI Taxonomy" id="3702"/>
    <lineage>
        <taxon>Eukaryota</taxon>
        <taxon>Viridiplantae</taxon>
        <taxon>Streptophyta</taxon>
        <taxon>Embryophyta</taxon>
        <taxon>Tracheophyta</taxon>
        <taxon>Spermatophyta</taxon>
        <taxon>Magnoliopsida</taxon>
        <taxon>eudicotyledons</taxon>
        <taxon>Gunneridae</taxon>
        <taxon>Pentapetalae</taxon>
        <taxon>rosids</taxon>
        <taxon>malvids</taxon>
        <taxon>Brassicales</taxon>
        <taxon>Brassicaceae</taxon>
        <taxon>Camelineae</taxon>
        <taxon>Arabidopsis</taxon>
    </lineage>
</organism>
<reference key="1">
    <citation type="submission" date="2000-06" db="EMBL/GenBank/DDBJ databases">
        <title>Structural analysis of Arabidopsis thaliana chromosome 5. XI.</title>
        <authorList>
            <person name="Kaneko T."/>
            <person name="Katoh T."/>
            <person name="Asamizu E."/>
            <person name="Sato S."/>
            <person name="Nakamura Y."/>
            <person name="Kotani H."/>
            <person name="Tabata S."/>
        </authorList>
    </citation>
    <scope>NUCLEOTIDE SEQUENCE [LARGE SCALE GENOMIC DNA]</scope>
    <source>
        <strain>cv. Columbia</strain>
    </source>
</reference>
<reference key="2">
    <citation type="journal article" date="2017" name="Plant J.">
        <title>Araport11: a complete reannotation of the Arabidopsis thaliana reference genome.</title>
        <authorList>
            <person name="Cheng C.Y."/>
            <person name="Krishnakumar V."/>
            <person name="Chan A.P."/>
            <person name="Thibaud-Nissen F."/>
            <person name="Schobel S."/>
            <person name="Town C.D."/>
        </authorList>
    </citation>
    <scope>GENOME REANNOTATION</scope>
    <source>
        <strain>cv. Columbia</strain>
    </source>
</reference>
<reference key="3">
    <citation type="journal article" date="2003" name="Science">
        <title>Empirical analysis of transcriptional activity in the Arabidopsis genome.</title>
        <authorList>
            <person name="Yamada K."/>
            <person name="Lim J."/>
            <person name="Dale J.M."/>
            <person name="Chen H."/>
            <person name="Shinn P."/>
            <person name="Palm C.J."/>
            <person name="Southwick A.M."/>
            <person name="Wu H.C."/>
            <person name="Kim C.J."/>
            <person name="Nguyen M."/>
            <person name="Pham P.K."/>
            <person name="Cheuk R.F."/>
            <person name="Karlin-Newmann G."/>
            <person name="Liu S.X."/>
            <person name="Lam B."/>
            <person name="Sakano H."/>
            <person name="Wu T."/>
            <person name="Yu G."/>
            <person name="Miranda M."/>
            <person name="Quach H.L."/>
            <person name="Tripp M."/>
            <person name="Chang C.H."/>
            <person name="Lee J.M."/>
            <person name="Toriumi M.J."/>
            <person name="Chan M.M."/>
            <person name="Tang C.C."/>
            <person name="Onodera C.S."/>
            <person name="Deng J.M."/>
            <person name="Akiyama K."/>
            <person name="Ansari Y."/>
            <person name="Arakawa T."/>
            <person name="Banh J."/>
            <person name="Banno F."/>
            <person name="Bowser L."/>
            <person name="Brooks S.Y."/>
            <person name="Carninci P."/>
            <person name="Chao Q."/>
            <person name="Choy N."/>
            <person name="Enju A."/>
            <person name="Goldsmith A.D."/>
            <person name="Gurjal M."/>
            <person name="Hansen N.F."/>
            <person name="Hayashizaki Y."/>
            <person name="Johnson-Hopson C."/>
            <person name="Hsuan V.W."/>
            <person name="Iida K."/>
            <person name="Karnes M."/>
            <person name="Khan S."/>
            <person name="Koesema E."/>
            <person name="Ishida J."/>
            <person name="Jiang P.X."/>
            <person name="Jones T."/>
            <person name="Kawai J."/>
            <person name="Kamiya A."/>
            <person name="Meyers C."/>
            <person name="Nakajima M."/>
            <person name="Narusaka M."/>
            <person name="Seki M."/>
            <person name="Sakurai T."/>
            <person name="Satou M."/>
            <person name="Tamse R."/>
            <person name="Vaysberg M."/>
            <person name="Wallender E.K."/>
            <person name="Wong C."/>
            <person name="Yamamura Y."/>
            <person name="Yuan S."/>
            <person name="Shinozaki K."/>
            <person name="Davis R.W."/>
            <person name="Theologis A."/>
            <person name="Ecker J.R."/>
        </authorList>
    </citation>
    <scope>NUCLEOTIDE SEQUENCE [LARGE SCALE MRNA]</scope>
    <source>
        <strain>cv. Columbia</strain>
    </source>
</reference>
<reference key="4">
    <citation type="journal article" date="2004" name="J. Exp. Bot.">
        <title>A glycolate dehydrogenase in the mitochondria of Arabidopsis thaliana.</title>
        <authorList>
            <person name="Bari R."/>
            <person name="Kebeish R."/>
            <person name="Kalamajka R."/>
            <person name="Rademacher T."/>
            <person name="Peterhansel C."/>
        </authorList>
    </citation>
    <scope>FUNCTION</scope>
    <scope>CATALYTIC ACTIVITY</scope>
    <scope>ACTIVITY REGULATION</scope>
    <scope>TISSUE SPECIFICITY</scope>
    <scope>INDUCTION</scope>
    <scope>SUBCELLULAR LOCATION</scope>
    <source>
        <strain>cv. Columbia</strain>
    </source>
</reference>
<reference key="5">
    <citation type="journal article" date="2009" name="J. Biol. Chem.">
        <title>Two D-2-hydroxy-acid dehydrogenases in Arabidopsis thaliana with catalytic capacities to participate in the last reactions of the methylglyoxal and beta-oxidation pathways.</title>
        <authorList>
            <person name="Engqvist M."/>
            <person name="Drincovich M.F."/>
            <person name="Fluegge U.I."/>
            <person name="Maurino V.G."/>
        </authorList>
    </citation>
    <scope>FUNCTION</scope>
    <scope>SUBUNIT</scope>
    <scope>COFACTOR</scope>
    <scope>CATALYTIC ACTIVITY</scope>
    <scope>BIOPHYSICOCHEMICAL PROPERTIES</scope>
    <scope>DISRUPTION PHENOTYPE</scope>
    <source>
        <strain>cv. Columbia</strain>
    </source>
</reference>
<sequence length="567" mass="62176">MAFASKFARSKTILSFLRPCRQLHSTPKSTGDVTVLSPVKGRRRLPTCWSSSLFPLAIAASATSFAYLNLSNPSISESSSALDSRDITVGGKDSTEAVVKGEYKQVPKELISQLKTILEDNLTTDYDERYFHGKPQNSFHKAVNIPDVVVFPRSEEEVSKILKSCNEYKVPIVPYGGATSIEGHTLAPKGGVCIDMSLMKRVKALHVEDMDVIVEPGIGWLELNEYLEEYGLFFPLDPGPGASIGGMCATRCSGSLAVRYGTMRDNVISLKVVLPNGDVVKTASRARKSAAGYDLTRLIIGSEGTLGVITEITLRLQKIPQHSVVAVCNFPTVKDAADVAIATMMSGIQVSRVELLDEVQIRAINMANGKNLTEAPTLMFEFIGTEAYTREQTQIVQQIASKHNGSDFMFAEEPEAKKELWKIRKEALWACYAMAPGHEAMITDVCVPLSHLAELISRSKKELDASSLLCTVIAHAGDGNFHTCIMFDPSSEEQRREAERLNHFMVHSALSMDGTCTGEHGVGTGKMKYLEKELGIEALQTMKRIKKTLDPNDIMNPGKLIPPHVCF</sequence>
<accession>Q94AX4</accession>
<accession>Q9FG12</accession>
<proteinExistence type="evidence at protein level"/>
<gene>
    <name evidence="6" type="primary">DLD</name>
    <name evidence="5" type="synonym">GDH</name>
    <name evidence="8" type="ordered locus">At5g06580</name>
    <name evidence="9" type="ORF">F15M7.11</name>
</gene>
<protein>
    <recommendedName>
        <fullName evidence="6">D-lactate dehydrogenase [cytochrome], mitochondrial</fullName>
        <shortName evidence="6">AtD-LDH</shortName>
        <ecNumber evidence="3 4">1.1.2.4</ecNumber>
    </recommendedName>
    <alternativeName>
        <fullName evidence="6">D-lactate ferricytochrome C oxidoreductase</fullName>
    </alternativeName>
    <alternativeName>
        <fullName evidence="5">Glycolate dehydrogenase</fullName>
    </alternativeName>
</protein>
<comment type="function">
    <text evidence="3 4">Catalyzes the stereospecific oxidation of D-lactate to pyruvate. Involved in the detoxification of methylglyoxal and D-lactate, but probably not involved in the metabolization of glycolate.</text>
</comment>
<comment type="catalytic activity">
    <reaction evidence="3 4">
        <text>(R)-lactate + 2 Fe(III)-[cytochrome c] = 2 Fe(II)-[cytochrome c] + pyruvate + 2 H(+)</text>
        <dbReference type="Rhea" id="RHEA:13521"/>
        <dbReference type="Rhea" id="RHEA-COMP:10350"/>
        <dbReference type="Rhea" id="RHEA-COMP:14399"/>
        <dbReference type="ChEBI" id="CHEBI:15361"/>
        <dbReference type="ChEBI" id="CHEBI:15378"/>
        <dbReference type="ChEBI" id="CHEBI:16004"/>
        <dbReference type="ChEBI" id="CHEBI:29033"/>
        <dbReference type="ChEBI" id="CHEBI:29034"/>
        <dbReference type="EC" id="1.1.2.4"/>
    </reaction>
</comment>
<comment type="cofactor">
    <cofactor evidence="4">
        <name>FAD</name>
        <dbReference type="ChEBI" id="CHEBI:57692"/>
    </cofactor>
    <text evidence="4">Binds 1 FAD per monomer.</text>
</comment>
<comment type="activity regulation">
    <text evidence="3">Inhibited by cyanide ions.</text>
</comment>
<comment type="biophysicochemical properties">
    <kinetics>
        <KM evidence="4">61 uM for D-2-hydroxybutyrate (with cytochrome c as acceptor molecule)</KM>
        <KM evidence="4">164 uM for D-lactate (with cytochrome c as acceptor molecule)</KM>
        <KM evidence="4">4486 uM for L-lactate (with cytochrome c as acceptor molecule)</KM>
        <KM evidence="4">8871 uM for D-glycerate (with cytochrome c as acceptor molecule)</KM>
        <KM evidence="4">432 uM for glycolate (with cytochrome c as acceptor molecule)</KM>
        <KM evidence="4">317 uM for D-lactate (with DCIP as acceptor molecule)</KM>
        <KM evidence="4">7134 uM for L-lactate (with DCIP as acceptor molecule)</KM>
        <KM evidence="4">596 uM for glycolate (with DCIP as acceptor molecule)</KM>
        <text evidence="4">kcat is 88 min(-1) with D-2-hydroxybutyrate as substrate (with cytochrome c as acceptor molecule) (PubMed:19586914). kcat is 65 min(-1) with D-lactate as substrate (with cytochrome c as acceptor molecule) (PubMed:19586914). kcat is 7 min(-1) with L-lactate as substrate (with cytochrome c as acceptor molecule) (PubMed:19586914). kcat is 6 min(-1) with D-glycerate as substrate (with cytochrome c as acceptor molecule) (PubMed:19586914). kcat is 0.1 min(-1) with glycolate as substrate (with cytochrome c as acceptor molecule) (PubMed:19586914). kcat is 73 min(-1) with D-lactate as substrate (with DCIP as acceptor molecule) (PubMed:19586914). kcat is 5 min(-1) with L-lactate as substrate (with DCIP as acceptor molecule) (PubMed:19586914). kcat is 0.4 min(-1) with glycolate as substrate (with DCIP as acceptor molecule) (PubMed:19586914).</text>
    </kinetics>
    <phDependence>
        <text evidence="4">Optimum pH is 8-9.</text>
    </phDependence>
</comment>
<comment type="subunit">
    <text evidence="4">Homodimer.</text>
</comment>
<comment type="subcellular location">
    <subcellularLocation>
        <location evidence="3">Mitochondrion</location>
    </subcellularLocation>
</comment>
<comment type="tissue specificity">
    <text evidence="3">Expressed in leaves, stems, flowers and roots.</text>
</comment>
<comment type="induction">
    <text evidence="3">By light.</text>
</comment>
<comment type="disruption phenotype">
    <text evidence="4">No visible phenotype when grown under standard conditions, but developmental retardation and lethality when grown in presence of methylglyoxal or D-lactate.</text>
</comment>
<comment type="similarity">
    <text evidence="7">Belongs to the FAD-binding oxidoreductase/transferase type 4 family.</text>
</comment>
<comment type="sequence caution" evidence="7">
    <conflict type="erroneous gene model prediction">
        <sequence resource="EMBL-CDS" id="BAB11407"/>
    </conflict>
</comment>